<name>CG065_HUMAN</name>
<evidence type="ECO:0000256" key="1">
    <source>
        <dbReference type="SAM" id="MobiDB-lite"/>
    </source>
</evidence>
<evidence type="ECO:0000305" key="2"/>
<evidence type="ECO:0000312" key="3">
    <source>
        <dbReference type="HGNC" id="HGNC:34432"/>
    </source>
</evidence>
<accession>Q6ZTY9</accession>
<accession>A4D2F8</accession>
<comment type="caution">
    <text evidence="2">Product of a dubious gene prediction.</text>
</comment>
<dbReference type="EMBL" id="AK126096">
    <property type="protein sequence ID" value="BAC86438.1"/>
    <property type="molecule type" value="mRNA"/>
</dbReference>
<dbReference type="EMBL" id="CH236958">
    <property type="protein sequence ID" value="EAL23804.1"/>
    <property type="molecule type" value="Genomic_DNA"/>
</dbReference>
<dbReference type="RefSeq" id="NP_001116537.1">
    <property type="nucleotide sequence ID" value="NM_001123065.1"/>
</dbReference>
<dbReference type="GlyGen" id="Q6ZTY9">
    <property type="glycosylation" value="1 site, 1 O-linked glycan (1 site)"/>
</dbReference>
<dbReference type="iPTMnet" id="Q6ZTY9"/>
<dbReference type="PhosphoSitePlus" id="Q6ZTY9"/>
<dbReference type="BioMuta" id="HGNC:34432"/>
<dbReference type="DMDM" id="74711828"/>
<dbReference type="MassIVE" id="Q6ZTY9"/>
<dbReference type="PaxDb" id="9606-ENSP00000485475"/>
<dbReference type="ProteomicsDB" id="68300"/>
<dbReference type="TopDownProteomics" id="Q6ZTY9"/>
<dbReference type="DNASU" id="401335"/>
<dbReference type="AGR" id="HGNC:34432"/>
<dbReference type="GeneCards" id="LINC02902"/>
<dbReference type="HGNC" id="HGNC:34432">
    <property type="gene designation" value="LINC02902"/>
</dbReference>
<dbReference type="neXtProt" id="NX_Q6ZTY9"/>
<dbReference type="eggNOG" id="ENOG502TFV3">
    <property type="taxonomic scope" value="Eukaryota"/>
</dbReference>
<dbReference type="InParanoid" id="Q6ZTY9"/>
<dbReference type="PAN-GO" id="Q6ZTY9">
    <property type="GO annotations" value="0 GO annotations based on evolutionary models"/>
</dbReference>
<dbReference type="PhylomeDB" id="Q6ZTY9"/>
<dbReference type="PathwayCommons" id="Q6ZTY9"/>
<dbReference type="BioGRID-ORCS" id="401335">
    <property type="hits" value="12 hits in 740 CRISPR screens"/>
</dbReference>
<dbReference type="GenomeRNAi" id="401335"/>
<dbReference type="Pharos" id="Q6ZTY9">
    <property type="development level" value="Tdark"/>
</dbReference>
<dbReference type="Proteomes" id="UP000005640">
    <property type="component" value="Unplaced"/>
</dbReference>
<dbReference type="RNAct" id="Q6ZTY9">
    <property type="molecule type" value="protein"/>
</dbReference>
<reference key="1">
    <citation type="journal article" date="2004" name="Nat. Genet.">
        <title>Complete sequencing and characterization of 21,243 full-length human cDNAs.</title>
        <authorList>
            <person name="Ota T."/>
            <person name="Suzuki Y."/>
            <person name="Nishikawa T."/>
            <person name="Otsuki T."/>
            <person name="Sugiyama T."/>
            <person name="Irie R."/>
            <person name="Wakamatsu A."/>
            <person name="Hayashi K."/>
            <person name="Sato H."/>
            <person name="Nagai K."/>
            <person name="Kimura K."/>
            <person name="Makita H."/>
            <person name="Sekine M."/>
            <person name="Obayashi M."/>
            <person name="Nishi T."/>
            <person name="Shibahara T."/>
            <person name="Tanaka T."/>
            <person name="Ishii S."/>
            <person name="Yamamoto J."/>
            <person name="Saito K."/>
            <person name="Kawai Y."/>
            <person name="Isono Y."/>
            <person name="Nakamura Y."/>
            <person name="Nagahari K."/>
            <person name="Murakami K."/>
            <person name="Yasuda T."/>
            <person name="Iwayanagi T."/>
            <person name="Wagatsuma M."/>
            <person name="Shiratori A."/>
            <person name="Sudo H."/>
            <person name="Hosoiri T."/>
            <person name="Kaku Y."/>
            <person name="Kodaira H."/>
            <person name="Kondo H."/>
            <person name="Sugawara M."/>
            <person name="Takahashi M."/>
            <person name="Kanda K."/>
            <person name="Yokoi T."/>
            <person name="Furuya T."/>
            <person name="Kikkawa E."/>
            <person name="Omura Y."/>
            <person name="Abe K."/>
            <person name="Kamihara K."/>
            <person name="Katsuta N."/>
            <person name="Sato K."/>
            <person name="Tanikawa M."/>
            <person name="Yamazaki M."/>
            <person name="Ninomiya K."/>
            <person name="Ishibashi T."/>
            <person name="Yamashita H."/>
            <person name="Murakawa K."/>
            <person name="Fujimori K."/>
            <person name="Tanai H."/>
            <person name="Kimata M."/>
            <person name="Watanabe M."/>
            <person name="Hiraoka S."/>
            <person name="Chiba Y."/>
            <person name="Ishida S."/>
            <person name="Ono Y."/>
            <person name="Takiguchi S."/>
            <person name="Watanabe S."/>
            <person name="Yosida M."/>
            <person name="Hotuta T."/>
            <person name="Kusano J."/>
            <person name="Kanehori K."/>
            <person name="Takahashi-Fujii A."/>
            <person name="Hara H."/>
            <person name="Tanase T.-O."/>
            <person name="Nomura Y."/>
            <person name="Togiya S."/>
            <person name="Komai F."/>
            <person name="Hara R."/>
            <person name="Takeuchi K."/>
            <person name="Arita M."/>
            <person name="Imose N."/>
            <person name="Musashino K."/>
            <person name="Yuuki H."/>
            <person name="Oshima A."/>
            <person name="Sasaki N."/>
            <person name="Aotsuka S."/>
            <person name="Yoshikawa Y."/>
            <person name="Matsunawa H."/>
            <person name="Ichihara T."/>
            <person name="Shiohata N."/>
            <person name="Sano S."/>
            <person name="Moriya S."/>
            <person name="Momiyama H."/>
            <person name="Satoh N."/>
            <person name="Takami S."/>
            <person name="Terashima Y."/>
            <person name="Suzuki O."/>
            <person name="Nakagawa S."/>
            <person name="Senoh A."/>
            <person name="Mizoguchi H."/>
            <person name="Goto Y."/>
            <person name="Shimizu F."/>
            <person name="Wakebe H."/>
            <person name="Hishigaki H."/>
            <person name="Watanabe T."/>
            <person name="Sugiyama A."/>
            <person name="Takemoto M."/>
            <person name="Kawakami B."/>
            <person name="Yamazaki M."/>
            <person name="Watanabe K."/>
            <person name="Kumagai A."/>
            <person name="Itakura S."/>
            <person name="Fukuzumi Y."/>
            <person name="Fujimori Y."/>
            <person name="Komiyama M."/>
            <person name="Tashiro H."/>
            <person name="Tanigami A."/>
            <person name="Fujiwara T."/>
            <person name="Ono T."/>
            <person name="Yamada K."/>
            <person name="Fujii Y."/>
            <person name="Ozaki K."/>
            <person name="Hirao M."/>
            <person name="Ohmori Y."/>
            <person name="Kawabata A."/>
            <person name="Hikiji T."/>
            <person name="Kobatake N."/>
            <person name="Inagaki H."/>
            <person name="Ikema Y."/>
            <person name="Okamoto S."/>
            <person name="Okitani R."/>
            <person name="Kawakami T."/>
            <person name="Noguchi S."/>
            <person name="Itoh T."/>
            <person name="Shigeta K."/>
            <person name="Senba T."/>
            <person name="Matsumura K."/>
            <person name="Nakajima Y."/>
            <person name="Mizuno T."/>
            <person name="Morinaga M."/>
            <person name="Sasaki M."/>
            <person name="Togashi T."/>
            <person name="Oyama M."/>
            <person name="Hata H."/>
            <person name="Watanabe M."/>
            <person name="Komatsu T."/>
            <person name="Mizushima-Sugano J."/>
            <person name="Satoh T."/>
            <person name="Shirai Y."/>
            <person name="Takahashi Y."/>
            <person name="Nakagawa K."/>
            <person name="Okumura K."/>
            <person name="Nagase T."/>
            <person name="Nomura N."/>
            <person name="Kikuchi H."/>
            <person name="Masuho Y."/>
            <person name="Yamashita R."/>
            <person name="Nakai K."/>
            <person name="Yada T."/>
            <person name="Nakamura Y."/>
            <person name="Ohara O."/>
            <person name="Isogai T."/>
            <person name="Sugano S."/>
        </authorList>
    </citation>
    <scope>NUCLEOTIDE SEQUENCE [LARGE SCALE MRNA]</scope>
    <source>
        <tissue>Testis</tissue>
    </source>
</reference>
<reference key="2">
    <citation type="journal article" date="2003" name="Science">
        <title>Human chromosome 7: DNA sequence and biology.</title>
        <authorList>
            <person name="Scherer S.W."/>
            <person name="Cheung J."/>
            <person name="MacDonald J.R."/>
            <person name="Osborne L.R."/>
            <person name="Nakabayashi K."/>
            <person name="Herbrick J.-A."/>
            <person name="Carson A.R."/>
            <person name="Parker-Katiraee L."/>
            <person name="Skaug J."/>
            <person name="Khaja R."/>
            <person name="Zhang J."/>
            <person name="Hudek A.K."/>
            <person name="Li M."/>
            <person name="Haddad M."/>
            <person name="Duggan G.E."/>
            <person name="Fernandez B.A."/>
            <person name="Kanematsu E."/>
            <person name="Gentles S."/>
            <person name="Christopoulos C.C."/>
            <person name="Choufani S."/>
            <person name="Kwasnicka D."/>
            <person name="Zheng X.H."/>
            <person name="Lai Z."/>
            <person name="Nusskern D.R."/>
            <person name="Zhang Q."/>
            <person name="Gu Z."/>
            <person name="Lu F."/>
            <person name="Zeesman S."/>
            <person name="Nowaczyk M.J."/>
            <person name="Teshima I."/>
            <person name="Chitayat D."/>
            <person name="Shuman C."/>
            <person name="Weksberg R."/>
            <person name="Zackai E.H."/>
            <person name="Grebe T.A."/>
            <person name="Cox S.R."/>
            <person name="Kirkpatrick S.J."/>
            <person name="Rahman N."/>
            <person name="Friedman J.M."/>
            <person name="Heng H.H.Q."/>
            <person name="Pelicci P.G."/>
            <person name="Lo-Coco F."/>
            <person name="Belloni E."/>
            <person name="Shaffer L.G."/>
            <person name="Pober B."/>
            <person name="Morton C.C."/>
            <person name="Gusella J.F."/>
            <person name="Bruns G.A.P."/>
            <person name="Korf B.R."/>
            <person name="Quade B.J."/>
            <person name="Ligon A.H."/>
            <person name="Ferguson H."/>
            <person name="Higgins A.W."/>
            <person name="Leach N.T."/>
            <person name="Herrick S.R."/>
            <person name="Lemyre E."/>
            <person name="Farra C.G."/>
            <person name="Kim H.-G."/>
            <person name="Summers A.M."/>
            <person name="Gripp K.W."/>
            <person name="Roberts W."/>
            <person name="Szatmari P."/>
            <person name="Winsor E.J.T."/>
            <person name="Grzeschik K.-H."/>
            <person name="Teebi A."/>
            <person name="Minassian B.A."/>
            <person name="Kere J."/>
            <person name="Armengol L."/>
            <person name="Pujana M.A."/>
            <person name="Estivill X."/>
            <person name="Wilson M.D."/>
            <person name="Koop B.F."/>
            <person name="Tosi S."/>
            <person name="Moore G.E."/>
            <person name="Boright A.P."/>
            <person name="Zlotorynski E."/>
            <person name="Kerem B."/>
            <person name="Kroisel P.M."/>
            <person name="Petek E."/>
            <person name="Oscier D.G."/>
            <person name="Mould S.J."/>
            <person name="Doehner H."/>
            <person name="Doehner K."/>
            <person name="Rommens J.M."/>
            <person name="Vincent J.B."/>
            <person name="Venter J.C."/>
            <person name="Li P.W."/>
            <person name="Mural R.J."/>
            <person name="Adams M.D."/>
            <person name="Tsui L.-C."/>
        </authorList>
    </citation>
    <scope>NUCLEOTIDE SEQUENCE [LARGE SCALE GENOMIC DNA] OF 2-151</scope>
</reference>
<organism>
    <name type="scientific">Homo sapiens</name>
    <name type="common">Human</name>
    <dbReference type="NCBI Taxonomy" id="9606"/>
    <lineage>
        <taxon>Eukaryota</taxon>
        <taxon>Metazoa</taxon>
        <taxon>Chordata</taxon>
        <taxon>Craniata</taxon>
        <taxon>Vertebrata</taxon>
        <taxon>Euteleostomi</taxon>
        <taxon>Mammalia</taxon>
        <taxon>Eutheria</taxon>
        <taxon>Euarchontoglires</taxon>
        <taxon>Primates</taxon>
        <taxon>Haplorrhini</taxon>
        <taxon>Catarrhini</taxon>
        <taxon>Hominidae</taxon>
        <taxon>Homo</taxon>
    </lineage>
</organism>
<feature type="chain" id="PRO_0000348465" description="Putative uncharacterized protein LINC02902">
    <location>
        <begin position="1"/>
        <end position="151"/>
    </location>
</feature>
<feature type="region of interest" description="Disordered" evidence="1">
    <location>
        <begin position="1"/>
        <end position="48"/>
    </location>
</feature>
<keyword id="KW-1185">Reference proteome</keyword>
<protein>
    <recommendedName>
        <fullName evidence="2">Putative uncharacterized protein LINC02902</fullName>
    </recommendedName>
    <alternativeName>
        <fullName evidence="3">Long intergenic non-protein coding RNA 2902</fullName>
    </alternativeName>
</protein>
<proteinExistence type="uncertain"/>
<gene>
    <name evidence="3" type="primary">LINC02902</name>
    <name evidence="3" type="synonym">C7orf65</name>
</gene>
<sequence>MRMAPTESTEGRRLWPGPREGGSGKETTSEKLSNLPRPHSYSPKRADAESFRGVPAAFKKCREVFRACWGSRELLFLFKAISEAGPAQNSCGITLEKAGGLEDTGSHWLSWARCKVLYINGFTDPWKDAQAWILIVSCKKGKGTPEREGRN</sequence>